<evidence type="ECO:0000269" key="1">
    <source>
    </source>
</evidence>
<evidence type="ECO:0000269" key="2">
    <source>
    </source>
</evidence>
<evidence type="ECO:0000305" key="3"/>
<evidence type="ECO:0007744" key="4">
    <source>
    </source>
</evidence>
<accession>P05626</accession>
<accession>D6W3T8</accession>
<accession>E9P905</accession>
<accession>Q02830</accession>
<comment type="function">
    <text>Mitochondrial membrane ATP synthase (F(1)F(0) ATP synthase or Complex V) produces ATP from ADP in the presence of a proton gradient across the membrane which is generated by electron transport complexes of the respiratory chain. F-type ATPases consist of two structural domains, F(1) - containing the extramembraneous catalytic core, and F(0) - containing the membrane proton channel, linked together by a central stalk and a peripheral stalk. During catalysis, ATP synthesis in the catalytic domain of F(1) is coupled via a rotary mechanism of the central stalk subunits to proton translocation. Part of the complex F(0) domain and the peripheric stalk, which acts as a stator to hold the catalytic alpha(3)beta(3) subcomplex and subunit a/ATP6 static relative to the rotary elements.</text>
</comment>
<comment type="subunit">
    <text>F-type ATPases have 2 components, CF(1) - the catalytic core - and CF(0) - the membrane proton channel. In yeast, the dimeric form of ATP synthase consists of 17 polypeptides: alpha, beta, gamma, delta, epsilon, 4 (B), 5 (OSCP), 6 (A), 8, 9 (C), d, E (Tim11), f, g, h, i/j and k.</text>
</comment>
<comment type="subcellular location">
    <subcellularLocation>
        <location>Mitochondrion</location>
    </subcellularLocation>
    <subcellularLocation>
        <location>Mitochondrion inner membrane</location>
    </subcellularLocation>
</comment>
<comment type="miscellaneous">
    <text evidence="1">Present with 12900 molecules/cell in log phase SD medium.</text>
</comment>
<comment type="similarity">
    <text evidence="3">Belongs to the eukaryotic ATPase B chain family.</text>
</comment>
<dbReference type="EMBL" id="X06732">
    <property type="protein sequence ID" value="CAA29909.1"/>
    <property type="molecule type" value="Genomic_DNA"/>
</dbReference>
<dbReference type="EMBL" id="X16721">
    <property type="protein sequence ID" value="CAA34703.1"/>
    <property type="molecule type" value="Genomic_DNA"/>
</dbReference>
<dbReference type="EMBL" id="U41849">
    <property type="protein sequence ID" value="AAB68260.1"/>
    <property type="molecule type" value="Genomic_DNA"/>
</dbReference>
<dbReference type="EMBL" id="AY692976">
    <property type="protein sequence ID" value="AAT92995.1"/>
    <property type="molecule type" value="Genomic_DNA"/>
</dbReference>
<dbReference type="EMBL" id="BK006949">
    <property type="protein sequence ID" value="DAA11354.1"/>
    <property type="molecule type" value="Genomic_DNA"/>
</dbReference>
<dbReference type="PIR" id="S61109">
    <property type="entry name" value="PWBYBC"/>
</dbReference>
<dbReference type="RefSeq" id="NP_015247.1">
    <property type="nucleotide sequence ID" value="NM_001183892.1"/>
</dbReference>
<dbReference type="PDB" id="6B2Z">
    <property type="method" value="EM"/>
    <property type="resolution" value="3.60 A"/>
    <property type="chains" value="N/b=36-244"/>
</dbReference>
<dbReference type="PDB" id="6B8H">
    <property type="method" value="EM"/>
    <property type="resolution" value="3.60 A"/>
    <property type="chains" value="b/q=36-244"/>
</dbReference>
<dbReference type="PDB" id="6CP3">
    <property type="method" value="EM"/>
    <property type="resolution" value="3.80 A"/>
    <property type="chains" value="Z=36-244"/>
</dbReference>
<dbReference type="PDB" id="6CP5">
    <property type="method" value="EM"/>
    <property type="resolution" value="4.20 A"/>
    <property type="chains" value="Z=36-244"/>
</dbReference>
<dbReference type="PDB" id="6CP6">
    <property type="method" value="EM"/>
    <property type="resolution" value="3.60 A"/>
    <property type="chains" value="Z=36-244"/>
</dbReference>
<dbReference type="PDB" id="6CP7">
    <property type="method" value="EM"/>
    <property type="resolution" value="4.10 A"/>
    <property type="chains" value="Z=36-244"/>
</dbReference>
<dbReference type="PDB" id="6WTD">
    <property type="method" value="EM"/>
    <property type="resolution" value="4.20 A"/>
    <property type="chains" value="Z=36-244"/>
</dbReference>
<dbReference type="PDB" id="7TJY">
    <property type="method" value="EM"/>
    <property type="resolution" value="3.80 A"/>
    <property type="chains" value="U=36-244"/>
</dbReference>
<dbReference type="PDB" id="7TJZ">
    <property type="method" value="EM"/>
    <property type="resolution" value="4.40 A"/>
    <property type="chains" value="U=36-244"/>
</dbReference>
<dbReference type="PDB" id="7TK0">
    <property type="method" value="EM"/>
    <property type="resolution" value="4.40 A"/>
    <property type="chains" value="U=36-244"/>
</dbReference>
<dbReference type="PDB" id="7TK1">
    <property type="method" value="EM"/>
    <property type="resolution" value="7.10 A"/>
    <property type="chains" value="U=36-244"/>
</dbReference>
<dbReference type="PDB" id="7TK2">
    <property type="method" value="EM"/>
    <property type="resolution" value="6.50 A"/>
    <property type="chains" value="U=36-244"/>
</dbReference>
<dbReference type="PDB" id="7TK3">
    <property type="method" value="EM"/>
    <property type="resolution" value="6.30 A"/>
    <property type="chains" value="U=36-244"/>
</dbReference>
<dbReference type="PDB" id="7TK4">
    <property type="method" value="EM"/>
    <property type="resolution" value="7.00 A"/>
    <property type="chains" value="U=36-244"/>
</dbReference>
<dbReference type="PDB" id="7TK5">
    <property type="method" value="EM"/>
    <property type="resolution" value="7.80 A"/>
    <property type="chains" value="U=36-244"/>
</dbReference>
<dbReference type="PDB" id="7TK6">
    <property type="method" value="EM"/>
    <property type="resolution" value="6.50 A"/>
    <property type="chains" value="U=36-244"/>
</dbReference>
<dbReference type="PDB" id="7TK7">
    <property type="method" value="EM"/>
    <property type="resolution" value="6.70 A"/>
    <property type="chains" value="U=36-244"/>
</dbReference>
<dbReference type="PDB" id="7TK8">
    <property type="method" value="EM"/>
    <property type="resolution" value="4.70 A"/>
    <property type="chains" value="U=36-244"/>
</dbReference>
<dbReference type="PDB" id="7TK9">
    <property type="method" value="EM"/>
    <property type="resolution" value="6.00 A"/>
    <property type="chains" value="U=36-244"/>
</dbReference>
<dbReference type="PDB" id="7TKA">
    <property type="method" value="EM"/>
    <property type="resolution" value="7.10 A"/>
    <property type="chains" value="U=36-244"/>
</dbReference>
<dbReference type="PDB" id="7TKB">
    <property type="method" value="EM"/>
    <property type="resolution" value="6.30 A"/>
    <property type="chains" value="U=36-244"/>
</dbReference>
<dbReference type="PDB" id="7TKC">
    <property type="method" value="EM"/>
    <property type="resolution" value="5.80 A"/>
    <property type="chains" value="U=36-244"/>
</dbReference>
<dbReference type="PDB" id="7TKD">
    <property type="method" value="EM"/>
    <property type="resolution" value="7.70 A"/>
    <property type="chains" value="U=36-244"/>
</dbReference>
<dbReference type="PDB" id="7TKE">
    <property type="method" value="EM"/>
    <property type="resolution" value="7.10 A"/>
    <property type="chains" value="U=36-244"/>
</dbReference>
<dbReference type="PDB" id="7TKF">
    <property type="method" value="EM"/>
    <property type="resolution" value="7.10 A"/>
    <property type="chains" value="U=36-244"/>
</dbReference>
<dbReference type="PDB" id="7TKG">
    <property type="method" value="EM"/>
    <property type="resolution" value="4.50 A"/>
    <property type="chains" value="U=36-244"/>
</dbReference>
<dbReference type="PDB" id="7TKH">
    <property type="method" value="EM"/>
    <property type="resolution" value="4.40 A"/>
    <property type="chains" value="U=36-244"/>
</dbReference>
<dbReference type="PDB" id="7TKI">
    <property type="method" value="EM"/>
    <property type="resolution" value="7.10 A"/>
    <property type="chains" value="U=36-244"/>
</dbReference>
<dbReference type="PDB" id="7TKJ">
    <property type="method" value="EM"/>
    <property type="resolution" value="7.50 A"/>
    <property type="chains" value="U=36-244"/>
</dbReference>
<dbReference type="PDB" id="7TKK">
    <property type="method" value="EM"/>
    <property type="resolution" value="7.30 A"/>
    <property type="chains" value="U=36-244"/>
</dbReference>
<dbReference type="PDB" id="7TKL">
    <property type="method" value="EM"/>
    <property type="resolution" value="6.40 A"/>
    <property type="chains" value="U=36-244"/>
</dbReference>
<dbReference type="PDB" id="7TKM">
    <property type="method" value="EM"/>
    <property type="resolution" value="4.50 A"/>
    <property type="chains" value="U=36-244"/>
</dbReference>
<dbReference type="PDB" id="7TKN">
    <property type="method" value="EM"/>
    <property type="resolution" value="7.10 A"/>
    <property type="chains" value="U=36-244"/>
</dbReference>
<dbReference type="PDB" id="7TKO">
    <property type="method" value="EM"/>
    <property type="resolution" value="4.80 A"/>
    <property type="chains" value="U=88-242"/>
</dbReference>
<dbReference type="PDB" id="7TKP">
    <property type="method" value="EM"/>
    <property type="resolution" value="4.60 A"/>
    <property type="chains" value="U=36-244"/>
</dbReference>
<dbReference type="PDB" id="7TKQ">
    <property type="method" value="EM"/>
    <property type="resolution" value="4.50 A"/>
    <property type="chains" value="U=36-244"/>
</dbReference>
<dbReference type="PDB" id="7TKR">
    <property type="method" value="EM"/>
    <property type="resolution" value="6.50 A"/>
    <property type="chains" value="U=36-244"/>
</dbReference>
<dbReference type="PDB" id="7TKS">
    <property type="method" value="EM"/>
    <property type="resolution" value="7.50 A"/>
    <property type="chains" value="U=36-244"/>
</dbReference>
<dbReference type="PDB" id="8F29">
    <property type="method" value="EM"/>
    <property type="resolution" value="4.00 A"/>
    <property type="chains" value="Z=88-242"/>
</dbReference>
<dbReference type="PDB" id="8F39">
    <property type="method" value="EM"/>
    <property type="resolution" value="3.50 A"/>
    <property type="chains" value="Z=88-242"/>
</dbReference>
<dbReference type="PDB" id="8FKJ">
    <property type="method" value="EM"/>
    <property type="resolution" value="4.20 A"/>
    <property type="chains" value="Z=88-242"/>
</dbReference>
<dbReference type="PDB" id="8FL8">
    <property type="method" value="EM"/>
    <property type="resolution" value="4.20 A"/>
    <property type="chains" value="Z=88-242"/>
</dbReference>
<dbReference type="PDBsum" id="6B2Z"/>
<dbReference type="PDBsum" id="6B8H"/>
<dbReference type="PDBsum" id="6CP3"/>
<dbReference type="PDBsum" id="6CP5"/>
<dbReference type="PDBsum" id="6CP6"/>
<dbReference type="PDBsum" id="6CP7"/>
<dbReference type="PDBsum" id="6WTD"/>
<dbReference type="PDBsum" id="7TJY"/>
<dbReference type="PDBsum" id="7TJZ"/>
<dbReference type="PDBsum" id="7TK0"/>
<dbReference type="PDBsum" id="7TK1"/>
<dbReference type="PDBsum" id="7TK2"/>
<dbReference type="PDBsum" id="7TK3"/>
<dbReference type="PDBsum" id="7TK4"/>
<dbReference type="PDBsum" id="7TK5"/>
<dbReference type="PDBsum" id="7TK6"/>
<dbReference type="PDBsum" id="7TK7"/>
<dbReference type="PDBsum" id="7TK8"/>
<dbReference type="PDBsum" id="7TK9"/>
<dbReference type="PDBsum" id="7TKA"/>
<dbReference type="PDBsum" id="7TKB"/>
<dbReference type="PDBsum" id="7TKC"/>
<dbReference type="PDBsum" id="7TKD"/>
<dbReference type="PDBsum" id="7TKE"/>
<dbReference type="PDBsum" id="7TKF"/>
<dbReference type="PDBsum" id="7TKG"/>
<dbReference type="PDBsum" id="7TKH"/>
<dbReference type="PDBsum" id="7TKI"/>
<dbReference type="PDBsum" id="7TKJ"/>
<dbReference type="PDBsum" id="7TKK"/>
<dbReference type="PDBsum" id="7TKL"/>
<dbReference type="PDBsum" id="7TKM"/>
<dbReference type="PDBsum" id="7TKN"/>
<dbReference type="PDBsum" id="7TKO"/>
<dbReference type="PDBsum" id="7TKP"/>
<dbReference type="PDBsum" id="7TKQ"/>
<dbReference type="PDBsum" id="7TKR"/>
<dbReference type="PDBsum" id="7TKS"/>
<dbReference type="PDBsum" id="8F29"/>
<dbReference type="PDBsum" id="8F39"/>
<dbReference type="PDBsum" id="8FKJ"/>
<dbReference type="PDBsum" id="8FL8"/>
<dbReference type="EMDB" id="EMD-21894"/>
<dbReference type="EMDB" id="EMD-25946"/>
<dbReference type="EMDB" id="EMD-25947"/>
<dbReference type="EMDB" id="EMD-25948"/>
<dbReference type="EMDB" id="EMD-25949"/>
<dbReference type="EMDB" id="EMD-25954"/>
<dbReference type="EMDB" id="EMD-25955"/>
<dbReference type="EMDB" id="EMD-25956"/>
<dbReference type="EMDB" id="EMD-25957"/>
<dbReference type="EMDB" id="EMD-25958"/>
<dbReference type="EMDB" id="EMD-25959"/>
<dbReference type="EMDB" id="EMD-25960"/>
<dbReference type="EMDB" id="EMD-25961"/>
<dbReference type="EMDB" id="EMD-25962"/>
<dbReference type="EMDB" id="EMD-25963"/>
<dbReference type="EMDB" id="EMD-25964"/>
<dbReference type="EMDB" id="EMD-25965"/>
<dbReference type="EMDB" id="EMD-25966"/>
<dbReference type="EMDB" id="EMD-25967"/>
<dbReference type="EMDB" id="EMD-25968"/>
<dbReference type="EMDB" id="EMD-25969"/>
<dbReference type="EMDB" id="EMD-25970"/>
<dbReference type="EMDB" id="EMD-25971"/>
<dbReference type="EMDB" id="EMD-25972"/>
<dbReference type="EMDB" id="EMD-25973"/>
<dbReference type="EMDB" id="EMD-25974"/>
<dbReference type="EMDB" id="EMD-25975"/>
<dbReference type="EMDB" id="EMD-25977"/>
<dbReference type="EMDB" id="EMD-25978"/>
<dbReference type="EMDB" id="EMD-25979"/>
<dbReference type="EMDB" id="EMD-25980"/>
<dbReference type="EMDB" id="EMD-28809"/>
<dbReference type="EMDB" id="EMD-28835"/>
<dbReference type="EMDB" id="EMD-29250"/>
<dbReference type="EMDB" id="EMD-29270"/>
<dbReference type="EMDB" id="EMD-7036"/>
<dbReference type="EMDB" id="EMD-7546"/>
<dbReference type="EMDB" id="EMD-7547"/>
<dbReference type="EMDB" id="EMD-7548"/>
<dbReference type="EMDB" id="EMD-7549"/>
<dbReference type="SMR" id="P05626"/>
<dbReference type="BioGRID" id="36102">
    <property type="interactions" value="181"/>
</dbReference>
<dbReference type="ComplexPortal" id="CPX-3281">
    <property type="entry name" value="Mitochondrial proton-transporting ATP synthase complex"/>
</dbReference>
<dbReference type="DIP" id="DIP-3036N"/>
<dbReference type="FunCoup" id="P05626">
    <property type="interactions" value="569"/>
</dbReference>
<dbReference type="IntAct" id="P05626">
    <property type="interactions" value="59"/>
</dbReference>
<dbReference type="MINT" id="P05626"/>
<dbReference type="STRING" id="4932.YPL078C"/>
<dbReference type="TCDB" id="3.A.2.1.3">
    <property type="family name" value="the h+- or na+-translocating f-type, v-type and a-type atpase (f-atpase) superfamily"/>
</dbReference>
<dbReference type="iPTMnet" id="P05626"/>
<dbReference type="PaxDb" id="4932-YPL078C"/>
<dbReference type="PeptideAtlas" id="P05626"/>
<dbReference type="EnsemblFungi" id="YPL078C_mRNA">
    <property type="protein sequence ID" value="YPL078C"/>
    <property type="gene ID" value="YPL078C"/>
</dbReference>
<dbReference type="GeneID" id="856027"/>
<dbReference type="KEGG" id="sce:YPL078C"/>
<dbReference type="AGR" id="SGD:S000005999"/>
<dbReference type="SGD" id="S000005999">
    <property type="gene designation" value="ATP4"/>
</dbReference>
<dbReference type="VEuPathDB" id="FungiDB:YPL078C"/>
<dbReference type="eggNOG" id="KOG3976">
    <property type="taxonomic scope" value="Eukaryota"/>
</dbReference>
<dbReference type="GeneTree" id="ENSGT00390000001958"/>
<dbReference type="HOGENOM" id="CLU_077208_0_0_1"/>
<dbReference type="InParanoid" id="P05626"/>
<dbReference type="OMA" id="YTEWADG"/>
<dbReference type="OrthoDB" id="67388at2759"/>
<dbReference type="BioCyc" id="YEAST:G3O-33985-MONOMER"/>
<dbReference type="BioGRID-ORCS" id="856027">
    <property type="hits" value="6 hits in 10 CRISPR screens"/>
</dbReference>
<dbReference type="PRO" id="PR:P05626"/>
<dbReference type="Proteomes" id="UP000002311">
    <property type="component" value="Chromosome XVI"/>
</dbReference>
<dbReference type="RNAct" id="P05626">
    <property type="molecule type" value="protein"/>
</dbReference>
<dbReference type="GO" id="GO:0005743">
    <property type="term" value="C:mitochondrial inner membrane"/>
    <property type="evidence" value="ECO:0000314"/>
    <property type="project" value="ComplexPortal"/>
</dbReference>
<dbReference type="GO" id="GO:0005739">
    <property type="term" value="C:mitochondrion"/>
    <property type="evidence" value="ECO:0000315"/>
    <property type="project" value="SGD"/>
</dbReference>
<dbReference type="GO" id="GO:0045259">
    <property type="term" value="C:proton-transporting ATP synthase complex"/>
    <property type="evidence" value="ECO:0000314"/>
    <property type="project" value="SGD"/>
</dbReference>
<dbReference type="GO" id="GO:0015078">
    <property type="term" value="F:proton transmembrane transporter activity"/>
    <property type="evidence" value="ECO:0007669"/>
    <property type="project" value="InterPro"/>
</dbReference>
<dbReference type="GO" id="GO:0065003">
    <property type="term" value="P:protein-containing complex assembly"/>
    <property type="evidence" value="ECO:0000315"/>
    <property type="project" value="SGD"/>
</dbReference>
<dbReference type="GO" id="GO:0015986">
    <property type="term" value="P:proton motive force-driven ATP synthesis"/>
    <property type="evidence" value="ECO:0000314"/>
    <property type="project" value="ComplexPortal"/>
</dbReference>
<dbReference type="FunFam" id="1.20.5.2210:FF:000002">
    <property type="entry name" value="ATP synthase subunit 4 mitochondrial"/>
    <property type="match status" value="1"/>
</dbReference>
<dbReference type="Gene3D" id="1.20.5.2210">
    <property type="match status" value="1"/>
</dbReference>
<dbReference type="InterPro" id="IPR008688">
    <property type="entry name" value="ATP_synth_Bsub_B/MI25"/>
</dbReference>
<dbReference type="InterPro" id="IPR013837">
    <property type="entry name" value="ATP_synth_F0_suB"/>
</dbReference>
<dbReference type="PANTHER" id="PTHR12733:SF3">
    <property type="entry name" value="ATP SYNTHASE F(0) COMPLEX SUBUNIT B1, MITOCHONDRIAL"/>
    <property type="match status" value="1"/>
</dbReference>
<dbReference type="PANTHER" id="PTHR12733">
    <property type="entry name" value="MITOCHONDRIAL ATP SYNTHASE B CHAIN"/>
    <property type="match status" value="1"/>
</dbReference>
<dbReference type="Pfam" id="PF05405">
    <property type="entry name" value="Mt_ATP-synt_B"/>
    <property type="match status" value="1"/>
</dbReference>
<dbReference type="SUPFAM" id="SSF161060">
    <property type="entry name" value="ATP synthase B chain-like"/>
    <property type="match status" value="1"/>
</dbReference>
<sequence length="244" mass="26925">MSMSMGVRGLALRSVSKTLFSQGVRCPSMVIGARYMSSTPEKQTDPKAKANSIINAIPGNNILTKTGVLGTSAAAVIYAISNELYVINDESILLLTFLGFTGLVAKYLAPAYKDFADARMKKVSDVLNASRNKHVEAVKDRIDSVSQLQNVAETTKVLFDVSKETVELESEAFELKQKVELAHEAKAVLDSWVRYEASLRQLEQRQLAKSVISRVQSELGNPKFQEKVLQQSISEIEQLLSKLK</sequence>
<protein>
    <recommendedName>
        <fullName>ATP synthase subunit 4, mitochondrial</fullName>
    </recommendedName>
</protein>
<proteinExistence type="evidence at protein level"/>
<keyword id="KW-0002">3D-structure</keyword>
<keyword id="KW-0138">CF(0)</keyword>
<keyword id="KW-0903">Direct protein sequencing</keyword>
<keyword id="KW-0375">Hydrogen ion transport</keyword>
<keyword id="KW-0406">Ion transport</keyword>
<keyword id="KW-0472">Membrane</keyword>
<keyword id="KW-0496">Mitochondrion</keyword>
<keyword id="KW-0999">Mitochondrion inner membrane</keyword>
<keyword id="KW-0597">Phosphoprotein</keyword>
<keyword id="KW-1185">Reference proteome</keyword>
<keyword id="KW-0809">Transit peptide</keyword>
<keyword id="KW-0813">Transport</keyword>
<feature type="transit peptide" description="Mitochondrion" evidence="2">
    <location>
        <begin position="1"/>
        <end position="35"/>
    </location>
</feature>
<feature type="chain" id="PRO_0000002524" description="ATP synthase subunit 4, mitochondrial">
    <location>
        <begin position="36"/>
        <end position="244"/>
    </location>
</feature>
<feature type="modified residue" description="Phosphoserine" evidence="4">
    <location>
        <position position="144"/>
    </location>
</feature>
<feature type="sequence conflict" description="In Ref. 5; AAT92995." evidence="3" ref="5">
    <original>A</original>
    <variation>L</variation>
    <location>
        <position position="11"/>
    </location>
</feature>
<feature type="sequence conflict" description="In Ref. 1; CAA29909 and 2; CAA34703." evidence="3" ref="1 2">
    <original>A</original>
    <variation>R</variation>
    <location>
        <position position="172"/>
    </location>
</feature>
<gene>
    <name type="primary">ATP4</name>
    <name type="ordered locus">YPL078C</name>
    <name type="ORF">LPF7C</name>
</gene>
<name>ATPF_YEAST</name>
<reference key="1">
    <citation type="journal article" date="1988" name="Eur. J. Biochem.">
        <title>ATP4, the structural gene for yeast F0F1 ATPase subunit 4.</title>
        <authorList>
            <person name="Velours J."/>
            <person name="Durrens P."/>
            <person name="Aigle M."/>
            <person name="Guerin B."/>
        </authorList>
    </citation>
    <scope>NUCLEOTIDE SEQUENCE [GENOMIC DNA]</scope>
</reference>
<reference key="2">
    <citation type="journal article" date="1989" name="Biochimie">
        <title>The yeast ATP synthase subunit 4: structure and function.</title>
        <authorList>
            <person name="Velours J."/>
            <person name="Arselin G."/>
            <person name="Paul M.-F."/>
            <person name="Galante M."/>
            <person name="Durrens P."/>
            <person name="Aigle M."/>
            <person name="Guerin B."/>
        </authorList>
    </citation>
    <scope>NUCLEOTIDE SEQUENCE [GENOMIC DNA]</scope>
</reference>
<reference key="3">
    <citation type="journal article" date="1997" name="Nature">
        <title>The nucleotide sequence of Saccharomyces cerevisiae chromosome XVI.</title>
        <authorList>
            <person name="Bussey H."/>
            <person name="Storms R.K."/>
            <person name="Ahmed A."/>
            <person name="Albermann K."/>
            <person name="Allen E."/>
            <person name="Ansorge W."/>
            <person name="Araujo R."/>
            <person name="Aparicio A."/>
            <person name="Barrell B.G."/>
            <person name="Badcock K."/>
            <person name="Benes V."/>
            <person name="Botstein D."/>
            <person name="Bowman S."/>
            <person name="Brueckner M."/>
            <person name="Carpenter J."/>
            <person name="Cherry J.M."/>
            <person name="Chung E."/>
            <person name="Churcher C.M."/>
            <person name="Coster F."/>
            <person name="Davis K."/>
            <person name="Davis R.W."/>
            <person name="Dietrich F.S."/>
            <person name="Delius H."/>
            <person name="DiPaolo T."/>
            <person name="Dubois E."/>
            <person name="Duesterhoeft A."/>
            <person name="Duncan M."/>
            <person name="Floeth M."/>
            <person name="Fortin N."/>
            <person name="Friesen J.D."/>
            <person name="Fritz C."/>
            <person name="Goffeau A."/>
            <person name="Hall J."/>
            <person name="Hebling U."/>
            <person name="Heumann K."/>
            <person name="Hilbert H."/>
            <person name="Hillier L.W."/>
            <person name="Hunicke-Smith S."/>
            <person name="Hyman R.W."/>
            <person name="Johnston M."/>
            <person name="Kalman S."/>
            <person name="Kleine K."/>
            <person name="Komp C."/>
            <person name="Kurdi O."/>
            <person name="Lashkari D."/>
            <person name="Lew H."/>
            <person name="Lin A."/>
            <person name="Lin D."/>
            <person name="Louis E.J."/>
            <person name="Marathe R."/>
            <person name="Messenguy F."/>
            <person name="Mewes H.-W."/>
            <person name="Mirtipati S."/>
            <person name="Moestl D."/>
            <person name="Mueller-Auer S."/>
            <person name="Namath A."/>
            <person name="Nentwich U."/>
            <person name="Oefner P."/>
            <person name="Pearson D."/>
            <person name="Petel F.X."/>
            <person name="Pohl T.M."/>
            <person name="Purnelle B."/>
            <person name="Rajandream M.A."/>
            <person name="Rechmann S."/>
            <person name="Rieger M."/>
            <person name="Riles L."/>
            <person name="Roberts D."/>
            <person name="Schaefer M."/>
            <person name="Scharfe M."/>
            <person name="Scherens B."/>
            <person name="Schramm S."/>
            <person name="Schroeder M."/>
            <person name="Sdicu A.-M."/>
            <person name="Tettelin H."/>
            <person name="Urrestarazu L.A."/>
            <person name="Ushinsky S."/>
            <person name="Vierendeels F."/>
            <person name="Vissers S."/>
            <person name="Voss H."/>
            <person name="Walsh S.V."/>
            <person name="Wambutt R."/>
            <person name="Wang Y."/>
            <person name="Wedler E."/>
            <person name="Wedler H."/>
            <person name="Winnett E."/>
            <person name="Zhong W.-W."/>
            <person name="Zollner A."/>
            <person name="Vo D.H."/>
            <person name="Hani J."/>
        </authorList>
    </citation>
    <scope>NUCLEOTIDE SEQUENCE [LARGE SCALE GENOMIC DNA]</scope>
    <source>
        <strain>ATCC 204508 / S288c</strain>
    </source>
</reference>
<reference key="4">
    <citation type="journal article" date="2014" name="G3 (Bethesda)">
        <title>The reference genome sequence of Saccharomyces cerevisiae: Then and now.</title>
        <authorList>
            <person name="Engel S.R."/>
            <person name="Dietrich F.S."/>
            <person name="Fisk D.G."/>
            <person name="Binkley G."/>
            <person name="Balakrishnan R."/>
            <person name="Costanzo M.C."/>
            <person name="Dwight S.S."/>
            <person name="Hitz B.C."/>
            <person name="Karra K."/>
            <person name="Nash R.S."/>
            <person name="Weng S."/>
            <person name="Wong E.D."/>
            <person name="Lloyd P."/>
            <person name="Skrzypek M.S."/>
            <person name="Miyasato S.R."/>
            <person name="Simison M."/>
            <person name="Cherry J.M."/>
        </authorList>
    </citation>
    <scope>GENOME REANNOTATION</scope>
    <source>
        <strain>ATCC 204508 / S288c</strain>
    </source>
</reference>
<reference key="5">
    <citation type="journal article" date="2007" name="Genome Res.">
        <title>Approaching a complete repository of sequence-verified protein-encoding clones for Saccharomyces cerevisiae.</title>
        <authorList>
            <person name="Hu Y."/>
            <person name="Rolfs A."/>
            <person name="Bhullar B."/>
            <person name="Murthy T.V.S."/>
            <person name="Zhu C."/>
            <person name="Berger M.F."/>
            <person name="Camargo A.A."/>
            <person name="Kelley F."/>
            <person name="McCarron S."/>
            <person name="Jepson D."/>
            <person name="Richardson A."/>
            <person name="Raphael J."/>
            <person name="Moreira D."/>
            <person name="Taycher E."/>
            <person name="Zuo D."/>
            <person name="Mohr S."/>
            <person name="Kane M.F."/>
            <person name="Williamson J."/>
            <person name="Simpson A.J.G."/>
            <person name="Bulyk M.L."/>
            <person name="Harlow E."/>
            <person name="Marsischky G."/>
            <person name="Kolodner R.D."/>
            <person name="LaBaer J."/>
        </authorList>
    </citation>
    <scope>NUCLEOTIDE SEQUENCE [GENOMIC DNA]</scope>
    <source>
        <strain>ATCC 204508 / S288c</strain>
    </source>
</reference>
<reference key="6">
    <citation type="journal article" date="1987" name="Eur. J. Biochem.">
        <title>Subunit 4 of ATP synthase (F0F1) from yeast mitochondria. Purification, amino-acid composition and partial N-terminal sequence.</title>
        <authorList>
            <person name="Velours J."/>
            <person name="Arselin de Chateaubodeau G."/>
            <person name="Galante M."/>
            <person name="Guerin B."/>
        </authorList>
    </citation>
    <scope>PROTEIN SEQUENCE OF 36-45</scope>
</reference>
<reference key="7">
    <citation type="journal article" date="2003" name="Nature">
        <title>Global analysis of protein expression in yeast.</title>
        <authorList>
            <person name="Ghaemmaghami S."/>
            <person name="Huh W.-K."/>
            <person name="Bower K."/>
            <person name="Howson R.W."/>
            <person name="Belle A."/>
            <person name="Dephoure N."/>
            <person name="O'Shea E.K."/>
            <person name="Weissman J.S."/>
        </authorList>
    </citation>
    <scope>LEVEL OF PROTEIN EXPRESSION [LARGE SCALE ANALYSIS]</scope>
</reference>
<reference key="8">
    <citation type="journal article" date="2007" name="Mol. Cell. Proteomics">
        <title>Profiling phosphoproteins of yeast mitochondria reveals a role of phosphorylation in assembly of the ATP synthase.</title>
        <authorList>
            <person name="Reinders J."/>
            <person name="Wagner K."/>
            <person name="Zahedi R.P."/>
            <person name="Stojanovski D."/>
            <person name="Eyrich B."/>
            <person name="van der Laan M."/>
            <person name="Rehling P."/>
            <person name="Sickmann A."/>
            <person name="Pfanner N."/>
            <person name="Meisinger C."/>
        </authorList>
    </citation>
    <scope>PHOSPHORYLATION [LARGE SCALE ANALYSIS] AT SER-144</scope>
    <scope>IDENTIFICATION BY MASS SPECTROMETRY [LARGE SCALE ANALYSIS]</scope>
    <source>
        <strain>ATCC 76625 / YPH499</strain>
    </source>
</reference>
<organism>
    <name type="scientific">Saccharomyces cerevisiae (strain ATCC 204508 / S288c)</name>
    <name type="common">Baker's yeast</name>
    <dbReference type="NCBI Taxonomy" id="559292"/>
    <lineage>
        <taxon>Eukaryota</taxon>
        <taxon>Fungi</taxon>
        <taxon>Dikarya</taxon>
        <taxon>Ascomycota</taxon>
        <taxon>Saccharomycotina</taxon>
        <taxon>Saccharomycetes</taxon>
        <taxon>Saccharomycetales</taxon>
        <taxon>Saccharomycetaceae</taxon>
        <taxon>Saccharomyces</taxon>
    </lineage>
</organism>